<name>METE_MYCLE</name>
<dbReference type="EC" id="2.1.1.14" evidence="1"/>
<dbReference type="EMBL" id="Z94723">
    <property type="protein sequence ID" value="CAB08123.1"/>
    <property type="molecule type" value="Genomic_DNA"/>
</dbReference>
<dbReference type="EMBL" id="AL583920">
    <property type="protein sequence ID" value="CAC31342.1"/>
    <property type="molecule type" value="Genomic_DNA"/>
</dbReference>
<dbReference type="PIR" id="C87029">
    <property type="entry name" value="C87029"/>
</dbReference>
<dbReference type="RefSeq" id="NP_301723.1">
    <property type="nucleotide sequence ID" value="NC_002677.1"/>
</dbReference>
<dbReference type="RefSeq" id="WP_010908047.1">
    <property type="nucleotide sequence ID" value="NC_002677.1"/>
</dbReference>
<dbReference type="SMR" id="O05564"/>
<dbReference type="STRING" id="272631.gene:17574787"/>
<dbReference type="KEGG" id="mle:ML0961"/>
<dbReference type="PATRIC" id="fig|272631.5.peg.1742"/>
<dbReference type="Leproma" id="ML0961"/>
<dbReference type="eggNOG" id="COG0620">
    <property type="taxonomic scope" value="Bacteria"/>
</dbReference>
<dbReference type="HOGENOM" id="CLU_013175_0_0_11"/>
<dbReference type="OrthoDB" id="244285at2"/>
<dbReference type="UniPathway" id="UPA00051">
    <property type="reaction ID" value="UER00082"/>
</dbReference>
<dbReference type="Proteomes" id="UP000000806">
    <property type="component" value="Chromosome"/>
</dbReference>
<dbReference type="GO" id="GO:0003871">
    <property type="term" value="F:5-methyltetrahydropteroyltriglutamate-homocysteine S-methyltransferase activity"/>
    <property type="evidence" value="ECO:0007669"/>
    <property type="project" value="UniProtKB-UniRule"/>
</dbReference>
<dbReference type="GO" id="GO:0008270">
    <property type="term" value="F:zinc ion binding"/>
    <property type="evidence" value="ECO:0007669"/>
    <property type="project" value="InterPro"/>
</dbReference>
<dbReference type="GO" id="GO:0009086">
    <property type="term" value="P:methionine biosynthetic process"/>
    <property type="evidence" value="ECO:0007669"/>
    <property type="project" value="UniProtKB-UniRule"/>
</dbReference>
<dbReference type="GO" id="GO:0032259">
    <property type="term" value="P:methylation"/>
    <property type="evidence" value="ECO:0007669"/>
    <property type="project" value="UniProtKB-KW"/>
</dbReference>
<dbReference type="CDD" id="cd03311">
    <property type="entry name" value="CIMS_C_terminal_like"/>
    <property type="match status" value="1"/>
</dbReference>
<dbReference type="CDD" id="cd03312">
    <property type="entry name" value="CIMS_N_terminal_like"/>
    <property type="match status" value="1"/>
</dbReference>
<dbReference type="Gene3D" id="3.20.20.210">
    <property type="match status" value="2"/>
</dbReference>
<dbReference type="HAMAP" id="MF_00172">
    <property type="entry name" value="Meth_synth"/>
    <property type="match status" value="1"/>
</dbReference>
<dbReference type="InterPro" id="IPR013215">
    <property type="entry name" value="Cbl-indep_Met_Synth_N"/>
</dbReference>
<dbReference type="InterPro" id="IPR006276">
    <property type="entry name" value="Cobalamin-indep_Met_synthase"/>
</dbReference>
<dbReference type="InterPro" id="IPR002629">
    <property type="entry name" value="Met_Synth_C/arc"/>
</dbReference>
<dbReference type="InterPro" id="IPR038071">
    <property type="entry name" value="UROD/MetE-like_sf"/>
</dbReference>
<dbReference type="NCBIfam" id="TIGR01371">
    <property type="entry name" value="met_syn_B12ind"/>
    <property type="match status" value="1"/>
</dbReference>
<dbReference type="NCBIfam" id="NF003556">
    <property type="entry name" value="PRK05222.1"/>
    <property type="match status" value="1"/>
</dbReference>
<dbReference type="PANTHER" id="PTHR30519">
    <property type="entry name" value="5-METHYLTETRAHYDROPTEROYLTRIGLUTAMATE--HOMOCYSTEINE METHYLTRANSFERASE"/>
    <property type="match status" value="1"/>
</dbReference>
<dbReference type="Pfam" id="PF08267">
    <property type="entry name" value="Meth_synt_1"/>
    <property type="match status" value="1"/>
</dbReference>
<dbReference type="Pfam" id="PF01717">
    <property type="entry name" value="Meth_synt_2"/>
    <property type="match status" value="1"/>
</dbReference>
<dbReference type="PIRSF" id="PIRSF000382">
    <property type="entry name" value="MeTrfase_B12_ind"/>
    <property type="match status" value="1"/>
</dbReference>
<dbReference type="SUPFAM" id="SSF51726">
    <property type="entry name" value="UROD/MetE-like"/>
    <property type="match status" value="2"/>
</dbReference>
<gene>
    <name evidence="1" type="primary">metE</name>
    <name type="ordered locus">ML0961</name>
    <name type="ORF">MLCB33.14</name>
</gene>
<reference key="1">
    <citation type="journal article" date="2001" name="Nature">
        <title>Massive gene decay in the leprosy bacillus.</title>
        <authorList>
            <person name="Cole S.T."/>
            <person name="Eiglmeier K."/>
            <person name="Parkhill J."/>
            <person name="James K.D."/>
            <person name="Thomson N.R."/>
            <person name="Wheeler P.R."/>
            <person name="Honore N."/>
            <person name="Garnier T."/>
            <person name="Churcher C.M."/>
            <person name="Harris D.E."/>
            <person name="Mungall K.L."/>
            <person name="Basham D."/>
            <person name="Brown D."/>
            <person name="Chillingworth T."/>
            <person name="Connor R."/>
            <person name="Davies R.M."/>
            <person name="Devlin K."/>
            <person name="Duthoy S."/>
            <person name="Feltwell T."/>
            <person name="Fraser A."/>
            <person name="Hamlin N."/>
            <person name="Holroyd S."/>
            <person name="Hornsby T."/>
            <person name="Jagels K."/>
            <person name="Lacroix C."/>
            <person name="Maclean J."/>
            <person name="Moule S."/>
            <person name="Murphy L.D."/>
            <person name="Oliver K."/>
            <person name="Quail M.A."/>
            <person name="Rajandream M.A."/>
            <person name="Rutherford K.M."/>
            <person name="Rutter S."/>
            <person name="Seeger K."/>
            <person name="Simon S."/>
            <person name="Simmonds M."/>
            <person name="Skelton J."/>
            <person name="Squares R."/>
            <person name="Squares S."/>
            <person name="Stevens K."/>
            <person name="Taylor K."/>
            <person name="Whitehead S."/>
            <person name="Woodward J.R."/>
            <person name="Barrell B.G."/>
        </authorList>
    </citation>
    <scope>NUCLEOTIDE SEQUENCE [LARGE SCALE GENOMIC DNA]</scope>
    <source>
        <strain>TN</strain>
    </source>
</reference>
<organism>
    <name type="scientific">Mycobacterium leprae (strain TN)</name>
    <dbReference type="NCBI Taxonomy" id="272631"/>
    <lineage>
        <taxon>Bacteria</taxon>
        <taxon>Bacillati</taxon>
        <taxon>Actinomycetota</taxon>
        <taxon>Actinomycetes</taxon>
        <taxon>Mycobacteriales</taxon>
        <taxon>Mycobacteriaceae</taxon>
        <taxon>Mycobacterium</taxon>
    </lineage>
</organism>
<proteinExistence type="inferred from homology"/>
<keyword id="KW-0028">Amino-acid biosynthesis</keyword>
<keyword id="KW-0479">Metal-binding</keyword>
<keyword id="KW-0486">Methionine biosynthesis</keyword>
<keyword id="KW-0489">Methyltransferase</keyword>
<keyword id="KW-1185">Reference proteome</keyword>
<keyword id="KW-0677">Repeat</keyword>
<keyword id="KW-0808">Transferase</keyword>
<keyword id="KW-0862">Zinc</keyword>
<comment type="function">
    <text evidence="1">Catalyzes the transfer of a methyl group from 5-methyltetrahydrofolate to homocysteine resulting in methionine formation.</text>
</comment>
<comment type="catalytic activity">
    <reaction evidence="1">
        <text>5-methyltetrahydropteroyltri-L-glutamate + L-homocysteine = tetrahydropteroyltri-L-glutamate + L-methionine</text>
        <dbReference type="Rhea" id="RHEA:21196"/>
        <dbReference type="ChEBI" id="CHEBI:57844"/>
        <dbReference type="ChEBI" id="CHEBI:58140"/>
        <dbReference type="ChEBI" id="CHEBI:58199"/>
        <dbReference type="ChEBI" id="CHEBI:58207"/>
        <dbReference type="EC" id="2.1.1.14"/>
    </reaction>
</comment>
<comment type="cofactor">
    <cofactor evidence="1">
        <name>Zn(2+)</name>
        <dbReference type="ChEBI" id="CHEBI:29105"/>
    </cofactor>
    <text evidence="1">Binds 1 zinc ion per subunit.</text>
</comment>
<comment type="pathway">
    <text evidence="1">Amino-acid biosynthesis; L-methionine biosynthesis via de novo pathway; L-methionine from L-homocysteine (MetE route): step 1/1.</text>
</comment>
<comment type="similarity">
    <text evidence="1 2">Belongs to the vitamin-B12 independent methionine synthase family.</text>
</comment>
<sequence length="760" mass="82235">MDELVTTQSFTATVTGSPRIGPRRELKRATEGYWAKRTSRSELESVASTLRRDMWSDLAAAGLDSVPVNTFSYYDQMLDTAFMLGALPARVAQVSDDLDQYFALARGNNDIKPLEMTKWFDTNYHYLVPEIEPATTFSLNPGKILGELKEALEQRIPSRPVIIGPVTFLLLSKGINGGGAPIQRLEELVGIYCTLLSLLAENGARWVQFDEPALVTDLSPDAPALAEAVYTALGSVSKRPAIYVATYFGNPGASLAGLARTPIEAIGVDFVCGADTSVAAVPELAGKTLVAGIVDGRNIWRTDLESALSKLATLLGSAATVAVSTSCSTLHVPYSLEPETDLDDNLRSWLAFGAEKVAEVVVLARALRDGRDAVADEIAASNAAVASRRSDPRLHNGQVRARIDSIVASGTHRGDAAQRRTSQDARLHLPPLPTTTIGSYPQTSAIRKARAALQDAEIDEAEYISRMKKEVADAIKLQEQLGLDVLVHGEPERNDMVQYFAEQLGGFFATQNGWVQSYGSRCVRPPILYGDVSRPHPMTIEWITYAQSLTDKPVKGMLTGPVTILAWSFVRDDQPLADTANQVALAIRDETVDLQSAGIAIIQVDEPALRELLPLRRADQDEYLCWAVKAFRLATSGVADSTQIHTHLCYSEFGEVIGAIADLDADVTSIEAARSHMEVLDDLNAVGFANSIGPGVYDIHSPRVPSTDEIAKSLRAALKAIPMQRLWVNPDCGLKTRSVDEVSASLQNMVAAARQVRAGA</sequence>
<evidence type="ECO:0000255" key="1">
    <source>
        <dbReference type="HAMAP-Rule" id="MF_00172"/>
    </source>
</evidence>
<evidence type="ECO:0000305" key="2"/>
<accession>O05564</accession>
<feature type="chain" id="PRO_0000098639" description="5-methyltetrahydropteroyltriglutamate--homocysteine methyltransferase">
    <location>
        <begin position="1"/>
        <end position="760"/>
    </location>
</feature>
<feature type="active site" description="Proton donor" evidence="1">
    <location>
        <position position="700"/>
    </location>
</feature>
<feature type="binding site" evidence="1">
    <location>
        <begin position="24"/>
        <end position="27"/>
    </location>
    <ligand>
        <name>5-methyltetrahydropteroyltri-L-glutamate</name>
        <dbReference type="ChEBI" id="CHEBI:58207"/>
    </ligand>
</feature>
<feature type="binding site" evidence="1">
    <location>
        <position position="118"/>
    </location>
    <ligand>
        <name>5-methyltetrahydropteroyltri-L-glutamate</name>
        <dbReference type="ChEBI" id="CHEBI:58207"/>
    </ligand>
</feature>
<feature type="binding site" evidence="1">
    <location>
        <begin position="437"/>
        <end position="439"/>
    </location>
    <ligand>
        <name>L-homocysteine</name>
        <dbReference type="ChEBI" id="CHEBI:58199"/>
    </ligand>
</feature>
<feature type="binding site" evidence="1">
    <location>
        <begin position="437"/>
        <end position="439"/>
    </location>
    <ligand>
        <name>L-methionine</name>
        <dbReference type="ChEBI" id="CHEBI:57844"/>
    </ligand>
</feature>
<feature type="binding site" evidence="1">
    <location>
        <position position="490"/>
    </location>
    <ligand>
        <name>L-homocysteine</name>
        <dbReference type="ChEBI" id="CHEBI:58199"/>
    </ligand>
</feature>
<feature type="binding site" evidence="1">
    <location>
        <position position="490"/>
    </location>
    <ligand>
        <name>L-methionine</name>
        <dbReference type="ChEBI" id="CHEBI:57844"/>
    </ligand>
</feature>
<feature type="binding site" evidence="1">
    <location>
        <begin position="521"/>
        <end position="522"/>
    </location>
    <ligand>
        <name>5-methyltetrahydropteroyltri-L-glutamate</name>
        <dbReference type="ChEBI" id="CHEBI:58207"/>
    </ligand>
</feature>
<feature type="binding site" evidence="1">
    <location>
        <position position="567"/>
    </location>
    <ligand>
        <name>5-methyltetrahydropteroyltri-L-glutamate</name>
        <dbReference type="ChEBI" id="CHEBI:58207"/>
    </ligand>
</feature>
<feature type="binding site" evidence="1">
    <location>
        <position position="605"/>
    </location>
    <ligand>
        <name>L-homocysteine</name>
        <dbReference type="ChEBI" id="CHEBI:58199"/>
    </ligand>
</feature>
<feature type="binding site" evidence="1">
    <location>
        <position position="605"/>
    </location>
    <ligand>
        <name>L-methionine</name>
        <dbReference type="ChEBI" id="CHEBI:57844"/>
    </ligand>
</feature>
<feature type="binding site" evidence="1">
    <location>
        <position position="611"/>
    </location>
    <ligand>
        <name>5-methyltetrahydropteroyltri-L-glutamate</name>
        <dbReference type="ChEBI" id="CHEBI:58207"/>
    </ligand>
</feature>
<feature type="binding site" evidence="1">
    <location>
        <position position="647"/>
    </location>
    <ligand>
        <name>Zn(2+)</name>
        <dbReference type="ChEBI" id="CHEBI:29105"/>
        <note>catalytic</note>
    </ligand>
</feature>
<feature type="binding site" evidence="1">
    <location>
        <position position="649"/>
    </location>
    <ligand>
        <name>Zn(2+)</name>
        <dbReference type="ChEBI" id="CHEBI:29105"/>
        <note>catalytic</note>
    </ligand>
</feature>
<feature type="binding site" evidence="1">
    <location>
        <position position="671"/>
    </location>
    <ligand>
        <name>Zn(2+)</name>
        <dbReference type="ChEBI" id="CHEBI:29105"/>
        <note>catalytic</note>
    </ligand>
</feature>
<feature type="binding site" evidence="1">
    <location>
        <position position="732"/>
    </location>
    <ligand>
        <name>Zn(2+)</name>
        <dbReference type="ChEBI" id="CHEBI:29105"/>
        <note>catalytic</note>
    </ligand>
</feature>
<protein>
    <recommendedName>
        <fullName evidence="1">5-methyltetrahydropteroyltriglutamate--homocysteine methyltransferase</fullName>
        <ecNumber evidence="1">2.1.1.14</ecNumber>
    </recommendedName>
    <alternativeName>
        <fullName evidence="1">Cobalamin-independent methionine synthase</fullName>
    </alternativeName>
    <alternativeName>
        <fullName evidence="1">Methionine synthase, vitamin-B12 independent isozyme</fullName>
    </alternativeName>
</protein>